<feature type="chain" id="PRO_1000148670" description="NADPH-dependent 7-cyano-7-deazaguanine reductase">
    <location>
        <begin position="1"/>
        <end position="151"/>
    </location>
</feature>
<feature type="active site" description="Thioimide intermediate" evidence="1">
    <location>
        <position position="49"/>
    </location>
</feature>
<feature type="active site" description="Proton donor" evidence="1">
    <location>
        <position position="56"/>
    </location>
</feature>
<feature type="binding site" evidence="1">
    <location>
        <begin position="71"/>
        <end position="73"/>
    </location>
    <ligand>
        <name>substrate</name>
    </ligand>
</feature>
<feature type="binding site" evidence="1">
    <location>
        <begin position="90"/>
        <end position="91"/>
    </location>
    <ligand>
        <name>substrate</name>
    </ligand>
</feature>
<organism>
    <name type="scientific">Caulobacter vibrioides (strain NA1000 / CB15N)</name>
    <name type="common">Caulobacter crescentus</name>
    <dbReference type="NCBI Taxonomy" id="565050"/>
    <lineage>
        <taxon>Bacteria</taxon>
        <taxon>Pseudomonadati</taxon>
        <taxon>Pseudomonadota</taxon>
        <taxon>Alphaproteobacteria</taxon>
        <taxon>Caulobacterales</taxon>
        <taxon>Caulobacteraceae</taxon>
        <taxon>Caulobacter</taxon>
    </lineage>
</organism>
<evidence type="ECO:0000255" key="1">
    <source>
        <dbReference type="HAMAP-Rule" id="MF_00818"/>
    </source>
</evidence>
<comment type="function">
    <text evidence="1">Catalyzes the NADPH-dependent reduction of 7-cyano-7-deazaguanine (preQ0) to 7-aminomethyl-7-deazaguanine (preQ1).</text>
</comment>
<comment type="catalytic activity">
    <reaction evidence="1">
        <text>7-aminomethyl-7-carbaguanine + 2 NADP(+) = 7-cyano-7-deazaguanine + 2 NADPH + 3 H(+)</text>
        <dbReference type="Rhea" id="RHEA:13409"/>
        <dbReference type="ChEBI" id="CHEBI:15378"/>
        <dbReference type="ChEBI" id="CHEBI:45075"/>
        <dbReference type="ChEBI" id="CHEBI:57783"/>
        <dbReference type="ChEBI" id="CHEBI:58349"/>
        <dbReference type="ChEBI" id="CHEBI:58703"/>
        <dbReference type="EC" id="1.7.1.13"/>
    </reaction>
</comment>
<comment type="pathway">
    <text evidence="1">tRNA modification; tRNA-queuosine biosynthesis.</text>
</comment>
<comment type="subcellular location">
    <subcellularLocation>
        <location evidence="1">Cytoplasm</location>
    </subcellularLocation>
</comment>
<comment type="similarity">
    <text evidence="1">Belongs to the GTP cyclohydrolase I family. QueF type 1 subfamily.</text>
</comment>
<reference key="1">
    <citation type="journal article" date="2010" name="J. Bacteriol.">
        <title>The genetic basis of laboratory adaptation in Caulobacter crescentus.</title>
        <authorList>
            <person name="Marks M.E."/>
            <person name="Castro-Rojas C.M."/>
            <person name="Teiling C."/>
            <person name="Du L."/>
            <person name="Kapatral V."/>
            <person name="Walunas T.L."/>
            <person name="Crosson S."/>
        </authorList>
    </citation>
    <scope>NUCLEOTIDE SEQUENCE [LARGE SCALE GENOMIC DNA]</scope>
    <source>
        <strain>NA1000 / CB15N</strain>
    </source>
</reference>
<gene>
    <name evidence="1" type="primary">queF</name>
    <name type="ordered locus">CCNA_02737</name>
</gene>
<name>QUEF_CAUVN</name>
<protein>
    <recommendedName>
        <fullName evidence="1">NADPH-dependent 7-cyano-7-deazaguanine reductase</fullName>
        <ecNumber evidence="1">1.7.1.13</ecNumber>
    </recommendedName>
    <alternativeName>
        <fullName evidence="1">7-cyano-7-carbaguanine reductase</fullName>
    </alternativeName>
    <alternativeName>
        <fullName evidence="1">NADPH-dependent nitrile oxidoreductase</fullName>
    </alternativeName>
    <alternativeName>
        <fullName evidence="1">PreQ(0) reductase</fullName>
    </alternativeName>
</protein>
<accession>B8H0X4</accession>
<proteinExistence type="inferred from homology"/>
<keyword id="KW-0963">Cytoplasm</keyword>
<keyword id="KW-0521">NADP</keyword>
<keyword id="KW-0560">Oxidoreductase</keyword>
<keyword id="KW-0671">Queuosine biosynthesis</keyword>
<keyword id="KW-1185">Reference proteome</keyword>
<sequence>MTDLNVTQLGRVVDAPESPEAAVLERVPNPQSDVLYLARFVAPEFTSLCPVTGQPDFAHLVIDYAPGDWLIESKSLKLYLTSFRNHGSFHEDCTVKVARKIVEIAQPRWLRIGGYWYPRGGIPIDVFWQTGPAPEGLWVPDQGVAPYRGRG</sequence>
<dbReference type="EC" id="1.7.1.13" evidence="1"/>
<dbReference type="EMBL" id="CP001340">
    <property type="protein sequence ID" value="ACL96202.1"/>
    <property type="molecule type" value="Genomic_DNA"/>
</dbReference>
<dbReference type="RefSeq" id="WP_010920506.1">
    <property type="nucleotide sequence ID" value="NC_011916.1"/>
</dbReference>
<dbReference type="RefSeq" id="YP_002518110.1">
    <property type="nucleotide sequence ID" value="NC_011916.1"/>
</dbReference>
<dbReference type="SMR" id="B8H0X4"/>
<dbReference type="GeneID" id="7330898"/>
<dbReference type="KEGG" id="ccs:CCNA_02737"/>
<dbReference type="PATRIC" id="fig|565050.3.peg.2683"/>
<dbReference type="HOGENOM" id="CLU_102489_0_1_5"/>
<dbReference type="OrthoDB" id="9789995at2"/>
<dbReference type="PhylomeDB" id="B8H0X4"/>
<dbReference type="UniPathway" id="UPA00392"/>
<dbReference type="Proteomes" id="UP000001364">
    <property type="component" value="Chromosome"/>
</dbReference>
<dbReference type="GO" id="GO:0005737">
    <property type="term" value="C:cytoplasm"/>
    <property type="evidence" value="ECO:0007669"/>
    <property type="project" value="UniProtKB-SubCell"/>
</dbReference>
<dbReference type="GO" id="GO:0033739">
    <property type="term" value="F:preQ1 synthase activity"/>
    <property type="evidence" value="ECO:0007669"/>
    <property type="project" value="UniProtKB-UniRule"/>
</dbReference>
<dbReference type="GO" id="GO:0008616">
    <property type="term" value="P:queuosine biosynthetic process"/>
    <property type="evidence" value="ECO:0007669"/>
    <property type="project" value="UniProtKB-UniRule"/>
</dbReference>
<dbReference type="GO" id="GO:0006400">
    <property type="term" value="P:tRNA modification"/>
    <property type="evidence" value="ECO:0007669"/>
    <property type="project" value="UniProtKB-UniRule"/>
</dbReference>
<dbReference type="Gene3D" id="3.30.1130.10">
    <property type="match status" value="1"/>
</dbReference>
<dbReference type="HAMAP" id="MF_00818">
    <property type="entry name" value="QueF_type1"/>
    <property type="match status" value="1"/>
</dbReference>
<dbReference type="InterPro" id="IPR043133">
    <property type="entry name" value="GTP-CH-I_C/QueF"/>
</dbReference>
<dbReference type="InterPro" id="IPR050084">
    <property type="entry name" value="NADPH_dep_7-cyano-7-deazaG_red"/>
</dbReference>
<dbReference type="InterPro" id="IPR029500">
    <property type="entry name" value="QueF"/>
</dbReference>
<dbReference type="InterPro" id="IPR016856">
    <property type="entry name" value="QueF_type1"/>
</dbReference>
<dbReference type="NCBIfam" id="TIGR03139">
    <property type="entry name" value="QueF-II"/>
    <property type="match status" value="1"/>
</dbReference>
<dbReference type="PANTHER" id="PTHR34354">
    <property type="entry name" value="NADPH-DEPENDENT 7-CYANO-7-DEAZAGUANINE REDUCTASE"/>
    <property type="match status" value="1"/>
</dbReference>
<dbReference type="PANTHER" id="PTHR34354:SF1">
    <property type="entry name" value="NADPH-DEPENDENT 7-CYANO-7-DEAZAGUANINE REDUCTASE"/>
    <property type="match status" value="1"/>
</dbReference>
<dbReference type="Pfam" id="PF14489">
    <property type="entry name" value="QueF"/>
    <property type="match status" value="1"/>
</dbReference>
<dbReference type="PIRSF" id="PIRSF027377">
    <property type="entry name" value="Nitrile_oxidored_QueF"/>
    <property type="match status" value="1"/>
</dbReference>
<dbReference type="SUPFAM" id="SSF55620">
    <property type="entry name" value="Tetrahydrobiopterin biosynthesis enzymes-like"/>
    <property type="match status" value="1"/>
</dbReference>